<comment type="function">
    <text evidence="1">Part of a sulfur-relay system required for 2-thiolation of 5-methylaminomethyl-2-thiouridine (mnm(5)s(2)U) at tRNA wobble positions.</text>
</comment>
<comment type="subunit">
    <text evidence="1">Heterohexamer, formed by a dimer of trimers. The hexameric TusBCD complex contains 2 copies each of TusB, TusC and TusD. The TusBCD complex interacts with TusE.</text>
</comment>
<comment type="subcellular location">
    <subcellularLocation>
        <location evidence="1">Cytoplasm</location>
    </subcellularLocation>
</comment>
<comment type="similarity">
    <text evidence="1">Belongs to the DsrF/TusC family.</text>
</comment>
<keyword id="KW-0963">Cytoplasm</keyword>
<keyword id="KW-0819">tRNA processing</keyword>
<accession>B7NLP9</accession>
<protein>
    <recommendedName>
        <fullName evidence="1">Protein TusC</fullName>
    </recommendedName>
    <alternativeName>
        <fullName evidence="1">tRNA 2-thiouridine synthesizing protein C</fullName>
    </alternativeName>
</protein>
<name>TUSC_ECO7I</name>
<reference key="1">
    <citation type="journal article" date="2009" name="PLoS Genet.">
        <title>Organised genome dynamics in the Escherichia coli species results in highly diverse adaptive paths.</title>
        <authorList>
            <person name="Touchon M."/>
            <person name="Hoede C."/>
            <person name="Tenaillon O."/>
            <person name="Barbe V."/>
            <person name="Baeriswyl S."/>
            <person name="Bidet P."/>
            <person name="Bingen E."/>
            <person name="Bonacorsi S."/>
            <person name="Bouchier C."/>
            <person name="Bouvet O."/>
            <person name="Calteau A."/>
            <person name="Chiapello H."/>
            <person name="Clermont O."/>
            <person name="Cruveiller S."/>
            <person name="Danchin A."/>
            <person name="Diard M."/>
            <person name="Dossat C."/>
            <person name="Karoui M.E."/>
            <person name="Frapy E."/>
            <person name="Garry L."/>
            <person name="Ghigo J.M."/>
            <person name="Gilles A.M."/>
            <person name="Johnson J."/>
            <person name="Le Bouguenec C."/>
            <person name="Lescat M."/>
            <person name="Mangenot S."/>
            <person name="Martinez-Jehanne V."/>
            <person name="Matic I."/>
            <person name="Nassif X."/>
            <person name="Oztas S."/>
            <person name="Petit M.A."/>
            <person name="Pichon C."/>
            <person name="Rouy Z."/>
            <person name="Ruf C.S."/>
            <person name="Schneider D."/>
            <person name="Tourret J."/>
            <person name="Vacherie B."/>
            <person name="Vallenet D."/>
            <person name="Medigue C."/>
            <person name="Rocha E.P.C."/>
            <person name="Denamur E."/>
        </authorList>
    </citation>
    <scope>NUCLEOTIDE SEQUENCE [LARGE SCALE GENOMIC DNA]</scope>
    <source>
        <strain>IAI39 / ExPEC</strain>
    </source>
</reference>
<dbReference type="EMBL" id="CU928164">
    <property type="protein sequence ID" value="CAR19938.1"/>
    <property type="molecule type" value="Genomic_DNA"/>
</dbReference>
<dbReference type="RefSeq" id="WP_000820714.1">
    <property type="nucleotide sequence ID" value="NC_011750.1"/>
</dbReference>
<dbReference type="RefSeq" id="YP_002409721.1">
    <property type="nucleotide sequence ID" value="NC_011750.1"/>
</dbReference>
<dbReference type="SMR" id="B7NLP9"/>
<dbReference type="STRING" id="585057.ECIAI39_3824"/>
<dbReference type="GeneID" id="93778654"/>
<dbReference type="KEGG" id="ect:ECIAI39_3824"/>
<dbReference type="PATRIC" id="fig|585057.6.peg.3961"/>
<dbReference type="HOGENOM" id="CLU_155943_1_0_6"/>
<dbReference type="Proteomes" id="UP000000749">
    <property type="component" value="Chromosome"/>
</dbReference>
<dbReference type="GO" id="GO:0005737">
    <property type="term" value="C:cytoplasm"/>
    <property type="evidence" value="ECO:0007669"/>
    <property type="project" value="UniProtKB-SubCell"/>
</dbReference>
<dbReference type="GO" id="GO:0008033">
    <property type="term" value="P:tRNA processing"/>
    <property type="evidence" value="ECO:0007669"/>
    <property type="project" value="UniProtKB-UniRule"/>
</dbReference>
<dbReference type="FunFam" id="3.40.1260.10:FF:000004">
    <property type="entry name" value="Sulfurtransferase TusC"/>
    <property type="match status" value="1"/>
</dbReference>
<dbReference type="Gene3D" id="3.40.1260.10">
    <property type="entry name" value="DsrEFH-like"/>
    <property type="match status" value="1"/>
</dbReference>
<dbReference type="HAMAP" id="MF_00389">
    <property type="entry name" value="Thiourid_synth_C"/>
    <property type="match status" value="1"/>
</dbReference>
<dbReference type="InterPro" id="IPR027396">
    <property type="entry name" value="DsrEFH-like"/>
</dbReference>
<dbReference type="InterPro" id="IPR003787">
    <property type="entry name" value="Sulphur_relay_DsrE/F-like"/>
</dbReference>
<dbReference type="InterPro" id="IPR037450">
    <property type="entry name" value="Sulphur_relay_TusC"/>
</dbReference>
<dbReference type="InterPro" id="IPR017462">
    <property type="entry name" value="Sulphur_relay_TusC/DsrF"/>
</dbReference>
<dbReference type="NCBIfam" id="NF001238">
    <property type="entry name" value="PRK00211.1"/>
    <property type="match status" value="1"/>
</dbReference>
<dbReference type="NCBIfam" id="TIGR03010">
    <property type="entry name" value="sulf_tusC_dsrF"/>
    <property type="match status" value="1"/>
</dbReference>
<dbReference type="PANTHER" id="PTHR38780">
    <property type="entry name" value="PROTEIN TUSC"/>
    <property type="match status" value="1"/>
</dbReference>
<dbReference type="PANTHER" id="PTHR38780:SF1">
    <property type="entry name" value="PROTEIN TUSC"/>
    <property type="match status" value="1"/>
</dbReference>
<dbReference type="Pfam" id="PF02635">
    <property type="entry name" value="DsrE"/>
    <property type="match status" value="1"/>
</dbReference>
<dbReference type="SUPFAM" id="SSF75169">
    <property type="entry name" value="DsrEFH-like"/>
    <property type="match status" value="1"/>
</dbReference>
<organism>
    <name type="scientific">Escherichia coli O7:K1 (strain IAI39 / ExPEC)</name>
    <dbReference type="NCBI Taxonomy" id="585057"/>
    <lineage>
        <taxon>Bacteria</taxon>
        <taxon>Pseudomonadati</taxon>
        <taxon>Pseudomonadota</taxon>
        <taxon>Gammaproteobacteria</taxon>
        <taxon>Enterobacterales</taxon>
        <taxon>Enterobacteriaceae</taxon>
        <taxon>Escherichia</taxon>
    </lineage>
</organism>
<feature type="chain" id="PRO_1000122836" description="Protein TusC">
    <location>
        <begin position="1"/>
        <end position="119"/>
    </location>
</feature>
<sequence length="119" mass="13045">MKRIAFVFSTAPHGTAAGREGLDALLATSALTDDLAVFFIADGVFQLLPGQKPDAVLARDYIATFKLLGLYDIEQCWVCAASLRERGLDPQTPFVVEATPLEADALRRELANYDVILRF</sequence>
<evidence type="ECO:0000255" key="1">
    <source>
        <dbReference type="HAMAP-Rule" id="MF_00389"/>
    </source>
</evidence>
<proteinExistence type="inferred from homology"/>
<gene>
    <name evidence="1" type="primary">tusC</name>
    <name type="ordered locus">ECIAI39_3824</name>
</gene>